<feature type="chain" id="PRO_0000082872" description="Peptide deformylase">
    <location>
        <begin position="1"/>
        <end position="198"/>
    </location>
</feature>
<feature type="active site" evidence="1">
    <location>
        <position position="168"/>
    </location>
</feature>
<feature type="binding site" evidence="1">
    <location>
        <position position="123"/>
    </location>
    <ligand>
        <name>Fe cation</name>
        <dbReference type="ChEBI" id="CHEBI:24875"/>
    </ligand>
</feature>
<feature type="binding site" evidence="1">
    <location>
        <position position="167"/>
    </location>
    <ligand>
        <name>Fe cation</name>
        <dbReference type="ChEBI" id="CHEBI:24875"/>
    </ligand>
</feature>
<feature type="binding site" evidence="1">
    <location>
        <position position="171"/>
    </location>
    <ligand>
        <name>Fe cation</name>
        <dbReference type="ChEBI" id="CHEBI:24875"/>
    </ligand>
</feature>
<evidence type="ECO:0000255" key="1">
    <source>
        <dbReference type="HAMAP-Rule" id="MF_00163"/>
    </source>
</evidence>
<name>DEF_UREPA</name>
<organism>
    <name type="scientific">Ureaplasma parvum serovar 3 (strain ATCC 700970)</name>
    <dbReference type="NCBI Taxonomy" id="273119"/>
    <lineage>
        <taxon>Bacteria</taxon>
        <taxon>Bacillati</taxon>
        <taxon>Mycoplasmatota</taxon>
        <taxon>Mycoplasmoidales</taxon>
        <taxon>Mycoplasmoidaceae</taxon>
        <taxon>Ureaplasma</taxon>
    </lineage>
</organism>
<sequence length="198" mass="23143">MYNIKFLDLLNSNLKPNPQWIFKDPHPILREVTQDIEGNELSKDDIYYLKKMVRYIDVCYHNQAKKYKIRSGIAIAANQVGWNKRATYIHFNDEAKEHHYLLINPHIIKRSSEIAYLNPGEGCLSVDDDRSGYVIRNKKVHVKAYDLISEQFIDQEFSGIIAICIQHEIGHLDAGLYYDNINQQQPFYADPSWTKIGR</sequence>
<protein>
    <recommendedName>
        <fullName evidence="1">Peptide deformylase</fullName>
        <shortName evidence="1">PDF</shortName>
        <ecNumber evidence="1">3.5.1.88</ecNumber>
    </recommendedName>
    <alternativeName>
        <fullName evidence="1">Polypeptide deformylase</fullName>
    </alternativeName>
</protein>
<gene>
    <name evidence="1" type="primary">def</name>
    <name type="ordered locus">UU465</name>
</gene>
<reference key="1">
    <citation type="journal article" date="2000" name="Nature">
        <title>The complete sequence of the mucosal pathogen Ureaplasma urealyticum.</title>
        <authorList>
            <person name="Glass J.I."/>
            <person name="Lefkowitz E.J."/>
            <person name="Glass J.S."/>
            <person name="Heiner C.R."/>
            <person name="Chen E.Y."/>
            <person name="Cassell G.H."/>
        </authorList>
    </citation>
    <scope>NUCLEOTIDE SEQUENCE [LARGE SCALE GENOMIC DNA]</scope>
    <source>
        <strain>ATCC 700970</strain>
    </source>
</reference>
<accession>Q9PQ25</accession>
<comment type="function">
    <text evidence="1">Removes the formyl group from the N-terminal Met of newly synthesized proteins. Requires at least a dipeptide for an efficient rate of reaction. N-terminal L-methionine is a prerequisite for activity but the enzyme has broad specificity at other positions.</text>
</comment>
<comment type="catalytic activity">
    <reaction evidence="1">
        <text>N-terminal N-formyl-L-methionyl-[peptide] + H2O = N-terminal L-methionyl-[peptide] + formate</text>
        <dbReference type="Rhea" id="RHEA:24420"/>
        <dbReference type="Rhea" id="RHEA-COMP:10639"/>
        <dbReference type="Rhea" id="RHEA-COMP:10640"/>
        <dbReference type="ChEBI" id="CHEBI:15377"/>
        <dbReference type="ChEBI" id="CHEBI:15740"/>
        <dbReference type="ChEBI" id="CHEBI:49298"/>
        <dbReference type="ChEBI" id="CHEBI:64731"/>
        <dbReference type="EC" id="3.5.1.88"/>
    </reaction>
</comment>
<comment type="cofactor">
    <cofactor evidence="1">
        <name>Fe(2+)</name>
        <dbReference type="ChEBI" id="CHEBI:29033"/>
    </cofactor>
    <text evidence="1">Binds 1 Fe(2+) ion.</text>
</comment>
<comment type="similarity">
    <text evidence="1">Belongs to the polypeptide deformylase family.</text>
</comment>
<keyword id="KW-0378">Hydrolase</keyword>
<keyword id="KW-0408">Iron</keyword>
<keyword id="KW-0479">Metal-binding</keyword>
<keyword id="KW-0648">Protein biosynthesis</keyword>
<keyword id="KW-1185">Reference proteome</keyword>
<proteinExistence type="inferred from homology"/>
<dbReference type="EC" id="3.5.1.88" evidence="1"/>
<dbReference type="EMBL" id="AF222894">
    <property type="protein sequence ID" value="AAF30877.1"/>
    <property type="molecule type" value="Genomic_DNA"/>
</dbReference>
<dbReference type="RefSeq" id="WP_010891784.1">
    <property type="nucleotide sequence ID" value="NC_002162.1"/>
</dbReference>
<dbReference type="SMR" id="Q9PQ25"/>
<dbReference type="STRING" id="273119.UU465"/>
<dbReference type="EnsemblBacteria" id="AAF30877">
    <property type="protein sequence ID" value="AAF30877"/>
    <property type="gene ID" value="UU465"/>
</dbReference>
<dbReference type="GeneID" id="29672237"/>
<dbReference type="KEGG" id="uur:UU465"/>
<dbReference type="PATRIC" id="fig|273119.6.peg.481"/>
<dbReference type="eggNOG" id="COG0242">
    <property type="taxonomic scope" value="Bacteria"/>
</dbReference>
<dbReference type="HOGENOM" id="CLU_061901_4_0_14"/>
<dbReference type="OrthoDB" id="9784988at2"/>
<dbReference type="Proteomes" id="UP000000423">
    <property type="component" value="Chromosome"/>
</dbReference>
<dbReference type="GO" id="GO:0046872">
    <property type="term" value="F:metal ion binding"/>
    <property type="evidence" value="ECO:0007669"/>
    <property type="project" value="UniProtKB-KW"/>
</dbReference>
<dbReference type="GO" id="GO:0042586">
    <property type="term" value="F:peptide deformylase activity"/>
    <property type="evidence" value="ECO:0007669"/>
    <property type="project" value="UniProtKB-UniRule"/>
</dbReference>
<dbReference type="GO" id="GO:0043686">
    <property type="term" value="P:co-translational protein modification"/>
    <property type="evidence" value="ECO:0007669"/>
    <property type="project" value="TreeGrafter"/>
</dbReference>
<dbReference type="GO" id="GO:0006412">
    <property type="term" value="P:translation"/>
    <property type="evidence" value="ECO:0007669"/>
    <property type="project" value="UniProtKB-UniRule"/>
</dbReference>
<dbReference type="CDD" id="cd00487">
    <property type="entry name" value="Pep_deformylase"/>
    <property type="match status" value="1"/>
</dbReference>
<dbReference type="Gene3D" id="3.90.45.10">
    <property type="entry name" value="Peptide deformylase"/>
    <property type="match status" value="1"/>
</dbReference>
<dbReference type="HAMAP" id="MF_00163">
    <property type="entry name" value="Pep_deformylase"/>
    <property type="match status" value="1"/>
</dbReference>
<dbReference type="InterPro" id="IPR023635">
    <property type="entry name" value="Peptide_deformylase"/>
</dbReference>
<dbReference type="InterPro" id="IPR036821">
    <property type="entry name" value="Peptide_deformylase_sf"/>
</dbReference>
<dbReference type="NCBIfam" id="TIGR00079">
    <property type="entry name" value="pept_deformyl"/>
    <property type="match status" value="1"/>
</dbReference>
<dbReference type="PANTHER" id="PTHR10458">
    <property type="entry name" value="PEPTIDE DEFORMYLASE"/>
    <property type="match status" value="1"/>
</dbReference>
<dbReference type="PANTHER" id="PTHR10458:SF22">
    <property type="entry name" value="PEPTIDE DEFORMYLASE"/>
    <property type="match status" value="1"/>
</dbReference>
<dbReference type="Pfam" id="PF01327">
    <property type="entry name" value="Pep_deformylase"/>
    <property type="match status" value="1"/>
</dbReference>
<dbReference type="PIRSF" id="PIRSF004749">
    <property type="entry name" value="Pep_def"/>
    <property type="match status" value="1"/>
</dbReference>
<dbReference type="PRINTS" id="PR01576">
    <property type="entry name" value="PDEFORMYLASE"/>
</dbReference>
<dbReference type="SUPFAM" id="SSF56420">
    <property type="entry name" value="Peptide deformylase"/>
    <property type="match status" value="1"/>
</dbReference>